<dbReference type="EMBL" id="CP000038">
    <property type="protein sequence ID" value="AAZ89383.1"/>
    <property type="molecule type" value="Genomic_DNA"/>
</dbReference>
<dbReference type="RefSeq" id="WP_000256450.1">
    <property type="nucleotide sequence ID" value="NC_007384.1"/>
</dbReference>
<dbReference type="SMR" id="Q3YYM9"/>
<dbReference type="GeneID" id="93774459"/>
<dbReference type="KEGG" id="ssn:SSON_2766"/>
<dbReference type="HOGENOM" id="CLU_100590_5_1_6"/>
<dbReference type="Proteomes" id="UP000002529">
    <property type="component" value="Chromosome"/>
</dbReference>
<dbReference type="GO" id="GO:0005737">
    <property type="term" value="C:cytoplasm"/>
    <property type="evidence" value="ECO:0007669"/>
    <property type="project" value="UniProtKB-ARBA"/>
</dbReference>
<dbReference type="GO" id="GO:0015935">
    <property type="term" value="C:small ribosomal subunit"/>
    <property type="evidence" value="ECO:0007669"/>
    <property type="project" value="TreeGrafter"/>
</dbReference>
<dbReference type="GO" id="GO:0003735">
    <property type="term" value="F:structural constituent of ribosome"/>
    <property type="evidence" value="ECO:0007669"/>
    <property type="project" value="InterPro"/>
</dbReference>
<dbReference type="GO" id="GO:0006412">
    <property type="term" value="P:translation"/>
    <property type="evidence" value="ECO:0007669"/>
    <property type="project" value="UniProtKB-UniRule"/>
</dbReference>
<dbReference type="FunFam" id="3.30.1320.10:FF:000001">
    <property type="entry name" value="30S ribosomal protein S16"/>
    <property type="match status" value="1"/>
</dbReference>
<dbReference type="Gene3D" id="3.30.1320.10">
    <property type="match status" value="1"/>
</dbReference>
<dbReference type="HAMAP" id="MF_00385">
    <property type="entry name" value="Ribosomal_bS16"/>
    <property type="match status" value="1"/>
</dbReference>
<dbReference type="InterPro" id="IPR000307">
    <property type="entry name" value="Ribosomal_bS16"/>
</dbReference>
<dbReference type="InterPro" id="IPR020592">
    <property type="entry name" value="Ribosomal_bS16_CS"/>
</dbReference>
<dbReference type="InterPro" id="IPR023803">
    <property type="entry name" value="Ribosomal_bS16_dom_sf"/>
</dbReference>
<dbReference type="NCBIfam" id="TIGR00002">
    <property type="entry name" value="S16"/>
    <property type="match status" value="1"/>
</dbReference>
<dbReference type="PANTHER" id="PTHR12919">
    <property type="entry name" value="30S RIBOSOMAL PROTEIN S16"/>
    <property type="match status" value="1"/>
</dbReference>
<dbReference type="PANTHER" id="PTHR12919:SF20">
    <property type="entry name" value="SMALL RIBOSOMAL SUBUNIT PROTEIN BS16M"/>
    <property type="match status" value="1"/>
</dbReference>
<dbReference type="Pfam" id="PF00886">
    <property type="entry name" value="Ribosomal_S16"/>
    <property type="match status" value="1"/>
</dbReference>
<dbReference type="SUPFAM" id="SSF54565">
    <property type="entry name" value="Ribosomal protein S16"/>
    <property type="match status" value="1"/>
</dbReference>
<dbReference type="PROSITE" id="PS00732">
    <property type="entry name" value="RIBOSOMAL_S16"/>
    <property type="match status" value="1"/>
</dbReference>
<feature type="chain" id="PRO_0000243871" description="Small ribosomal subunit protein bS16">
    <location>
        <begin position="1"/>
        <end position="82"/>
    </location>
</feature>
<proteinExistence type="inferred from homology"/>
<evidence type="ECO:0000255" key="1">
    <source>
        <dbReference type="HAMAP-Rule" id="MF_00385"/>
    </source>
</evidence>
<evidence type="ECO:0000305" key="2"/>
<accession>Q3YYM9</accession>
<gene>
    <name evidence="1" type="primary">rpsP</name>
    <name type="ordered locus">SSON_2766</name>
</gene>
<comment type="similarity">
    <text evidence="1">Belongs to the bacterial ribosomal protein bS16 family.</text>
</comment>
<keyword id="KW-1185">Reference proteome</keyword>
<keyword id="KW-0687">Ribonucleoprotein</keyword>
<keyword id="KW-0689">Ribosomal protein</keyword>
<sequence length="82" mass="9191">MVTIRLARHGAKKRPFYQVVVADSRNARNGRFIERVGFFNPIASEKEEGTRLDLDRIAHWVGQGATISDRVAALIKEVNKAA</sequence>
<protein>
    <recommendedName>
        <fullName evidence="1">Small ribosomal subunit protein bS16</fullName>
    </recommendedName>
    <alternativeName>
        <fullName evidence="2">30S ribosomal protein S16</fullName>
    </alternativeName>
</protein>
<organism>
    <name type="scientific">Shigella sonnei (strain Ss046)</name>
    <dbReference type="NCBI Taxonomy" id="300269"/>
    <lineage>
        <taxon>Bacteria</taxon>
        <taxon>Pseudomonadati</taxon>
        <taxon>Pseudomonadota</taxon>
        <taxon>Gammaproteobacteria</taxon>
        <taxon>Enterobacterales</taxon>
        <taxon>Enterobacteriaceae</taxon>
        <taxon>Shigella</taxon>
    </lineage>
</organism>
<name>RS16_SHISS</name>
<reference key="1">
    <citation type="journal article" date="2005" name="Nucleic Acids Res.">
        <title>Genome dynamics and diversity of Shigella species, the etiologic agents of bacillary dysentery.</title>
        <authorList>
            <person name="Yang F."/>
            <person name="Yang J."/>
            <person name="Zhang X."/>
            <person name="Chen L."/>
            <person name="Jiang Y."/>
            <person name="Yan Y."/>
            <person name="Tang X."/>
            <person name="Wang J."/>
            <person name="Xiong Z."/>
            <person name="Dong J."/>
            <person name="Xue Y."/>
            <person name="Zhu Y."/>
            <person name="Xu X."/>
            <person name="Sun L."/>
            <person name="Chen S."/>
            <person name="Nie H."/>
            <person name="Peng J."/>
            <person name="Xu J."/>
            <person name="Wang Y."/>
            <person name="Yuan Z."/>
            <person name="Wen Y."/>
            <person name="Yao Z."/>
            <person name="Shen Y."/>
            <person name="Qiang B."/>
            <person name="Hou Y."/>
            <person name="Yu J."/>
            <person name="Jin Q."/>
        </authorList>
    </citation>
    <scope>NUCLEOTIDE SEQUENCE [LARGE SCALE GENOMIC DNA]</scope>
    <source>
        <strain>Ss046</strain>
    </source>
</reference>